<accession>Q10714</accession>
<accession>A4V0P3</accession>
<accession>Q27572</accession>
<accession>Q9NKE4</accession>
<accession>Q9TX66</accession>
<accession>Q9VJV3</accession>
<sequence>MRLFLLALLATLAVTQALVKEEIQAKEYLENLNKELAKRTNVETEAAWAYGSNITDENEKKKNEISAELAKFMKEVASDTTKFQWRSYQSEDLKRQFKALTKLGYAALPEDDYAELLDTLSAMESNFAKVKVCDYKDSTKCDLALDPEIEEVISKSRDHEELAYYWREFYDKAGTAVRSQFERYVELNTKAAKLNNFTSGAEAWLDEYEDDTFEQQLEDIFADIRPLYQQIHGYVRFRLRKHYGDAVVSETGPIPMHLLGNMWAQQWSEIADIVSPFPEKPLVDVSAEMEKQGYTPLKMFQMGDDFFTSMNLTKLPQDFWDKSIIEKPTDGRDLVCHASAWDFYLTDDVRIKQCTRVTQDQLFTVHHELGHIQYFLQYQHQPFVYRTGANPGFHEAVGDVLSLSVSTPKHLEKIGLLKDYVRDDEARINQLFLTALDKIVFLPFAFTMDKYRWSLFRGEVDKANWNCAFWKLRDEYSGIEPPVVRSEKDFDAPAKYHISADVEYLRYLVSFIIQFQFYKSACIKAGQYDPDNVELPLDNCDIYGSAAAGAAFHNMLSMGASKPWPDALEAFNGERIMSGKAIAEYFEPLRVWLEAENIKNNVHIGWTTSNKCVSS</sequence>
<dbReference type="EC" id="3.4.15.1"/>
<dbReference type="EMBL" id="U25344">
    <property type="protein sequence ID" value="AAB02171.1"/>
    <property type="molecule type" value="mRNA"/>
</dbReference>
<dbReference type="EMBL" id="U34599">
    <property type="protein sequence ID" value="AAC46902.1"/>
    <property type="molecule type" value="mRNA"/>
</dbReference>
<dbReference type="EMBL" id="AE014134">
    <property type="protein sequence ID" value="AAF53353.2"/>
    <property type="molecule type" value="Genomic_DNA"/>
</dbReference>
<dbReference type="EMBL" id="AE014134">
    <property type="protein sequence ID" value="AAN10856.1"/>
    <property type="molecule type" value="Genomic_DNA"/>
</dbReference>
<dbReference type="EMBL" id="AY061129">
    <property type="protein sequence ID" value="AAL28677.1"/>
    <property type="molecule type" value="mRNA"/>
</dbReference>
<dbReference type="RefSeq" id="NP_001285915.1">
    <property type="nucleotide sequence ID" value="NM_001298986.1"/>
</dbReference>
<dbReference type="RefSeq" id="NP_477046.1">
    <property type="nucleotide sequence ID" value="NM_057698.5"/>
</dbReference>
<dbReference type="RefSeq" id="NP_723852.1">
    <property type="nucleotide sequence ID" value="NM_165070.3"/>
</dbReference>
<dbReference type="PDB" id="1J36">
    <property type="method" value="X-ray"/>
    <property type="resolution" value="2.40 A"/>
    <property type="chains" value="A/B=14-615"/>
</dbReference>
<dbReference type="PDB" id="1J37">
    <property type="method" value="X-ray"/>
    <property type="resolution" value="2.40 A"/>
    <property type="chains" value="A/B=14-615"/>
</dbReference>
<dbReference type="PDB" id="1J38">
    <property type="method" value="X-ray"/>
    <property type="resolution" value="2.60 A"/>
    <property type="chains" value="A/B=14-615"/>
</dbReference>
<dbReference type="PDB" id="2X8Y">
    <property type="method" value="X-ray"/>
    <property type="resolution" value="1.90 A"/>
    <property type="chains" value="A=17-614"/>
</dbReference>
<dbReference type="PDB" id="2X8Z">
    <property type="method" value="X-ray"/>
    <property type="resolution" value="1.98 A"/>
    <property type="chains" value="A=17-614"/>
</dbReference>
<dbReference type="PDB" id="2X90">
    <property type="method" value="X-ray"/>
    <property type="resolution" value="1.98 A"/>
    <property type="chains" value="A=17-614"/>
</dbReference>
<dbReference type="PDB" id="2X91">
    <property type="method" value="X-ray"/>
    <property type="resolution" value="1.98 A"/>
    <property type="chains" value="A=17-614"/>
</dbReference>
<dbReference type="PDB" id="2X92">
    <property type="method" value="X-ray"/>
    <property type="resolution" value="2.11 A"/>
    <property type="chains" value="A=17-615"/>
</dbReference>
<dbReference type="PDB" id="2X93">
    <property type="method" value="X-ray"/>
    <property type="resolution" value="1.98 A"/>
    <property type="chains" value="A=17-615"/>
</dbReference>
<dbReference type="PDB" id="2X94">
    <property type="method" value="X-ray"/>
    <property type="resolution" value="1.88 A"/>
    <property type="chains" value="A=17-615"/>
</dbReference>
<dbReference type="PDB" id="2X95">
    <property type="method" value="X-ray"/>
    <property type="resolution" value="1.96 A"/>
    <property type="chains" value="A=17-615"/>
</dbReference>
<dbReference type="PDB" id="2X96">
    <property type="method" value="X-ray"/>
    <property type="resolution" value="1.85 A"/>
    <property type="chains" value="A=17-614"/>
</dbReference>
<dbReference type="PDB" id="2X97">
    <property type="method" value="X-ray"/>
    <property type="resolution" value="1.85 A"/>
    <property type="chains" value="A=17-614"/>
</dbReference>
<dbReference type="PDB" id="2XHM">
    <property type="method" value="X-ray"/>
    <property type="resolution" value="1.96 A"/>
    <property type="chains" value="A=17-614"/>
</dbReference>
<dbReference type="PDB" id="3ZQZ">
    <property type="method" value="X-ray"/>
    <property type="resolution" value="2.35 A"/>
    <property type="chains" value="A=17-614"/>
</dbReference>
<dbReference type="PDB" id="4AA1">
    <property type="method" value="X-ray"/>
    <property type="resolution" value="1.99 A"/>
    <property type="chains" value="A=17-614"/>
</dbReference>
<dbReference type="PDB" id="4AA2">
    <property type="method" value="X-ray"/>
    <property type="resolution" value="1.99 A"/>
    <property type="chains" value="A=17-614"/>
</dbReference>
<dbReference type="PDB" id="4ASQ">
    <property type="method" value="X-ray"/>
    <property type="resolution" value="1.99 A"/>
    <property type="chains" value="A=17-614"/>
</dbReference>
<dbReference type="PDB" id="4ASR">
    <property type="method" value="X-ray"/>
    <property type="resolution" value="1.90 A"/>
    <property type="chains" value="A=17-614"/>
</dbReference>
<dbReference type="PDB" id="4CA7">
    <property type="method" value="X-ray"/>
    <property type="resolution" value="1.82 A"/>
    <property type="chains" value="A=17-614"/>
</dbReference>
<dbReference type="PDB" id="4CA8">
    <property type="method" value="X-ray"/>
    <property type="resolution" value="1.99 A"/>
    <property type="chains" value="A=17-614"/>
</dbReference>
<dbReference type="PDB" id="5A2R">
    <property type="method" value="X-ray"/>
    <property type="resolution" value="1.85 A"/>
    <property type="chains" value="A=18-615"/>
</dbReference>
<dbReference type="PDBsum" id="1J36"/>
<dbReference type="PDBsum" id="1J37"/>
<dbReference type="PDBsum" id="1J38"/>
<dbReference type="PDBsum" id="2X8Y"/>
<dbReference type="PDBsum" id="2X8Z"/>
<dbReference type="PDBsum" id="2X90"/>
<dbReference type="PDBsum" id="2X91"/>
<dbReference type="PDBsum" id="2X92"/>
<dbReference type="PDBsum" id="2X93"/>
<dbReference type="PDBsum" id="2X94"/>
<dbReference type="PDBsum" id="2X95"/>
<dbReference type="PDBsum" id="2X96"/>
<dbReference type="PDBsum" id="2X97"/>
<dbReference type="PDBsum" id="2XHM"/>
<dbReference type="PDBsum" id="3ZQZ"/>
<dbReference type="PDBsum" id="4AA1"/>
<dbReference type="PDBsum" id="4AA2"/>
<dbReference type="PDBsum" id="4ASQ"/>
<dbReference type="PDBsum" id="4ASR"/>
<dbReference type="PDBsum" id="4CA7"/>
<dbReference type="PDBsum" id="4CA8"/>
<dbReference type="PDBsum" id="5A2R"/>
<dbReference type="SMR" id="Q10714"/>
<dbReference type="BioGRID" id="60835">
    <property type="interactions" value="2"/>
</dbReference>
<dbReference type="FunCoup" id="Q10714">
    <property type="interactions" value="57"/>
</dbReference>
<dbReference type="IntAct" id="Q10714">
    <property type="interactions" value="7"/>
</dbReference>
<dbReference type="MINT" id="Q10714"/>
<dbReference type="STRING" id="7227.FBpp0080130"/>
<dbReference type="MEROPS" id="M02.003"/>
<dbReference type="GlyCosmos" id="Q10714">
    <property type="glycosylation" value="3 sites, No reported glycans"/>
</dbReference>
<dbReference type="GlyGen" id="Q10714">
    <property type="glycosylation" value="3 sites"/>
</dbReference>
<dbReference type="iPTMnet" id="Q10714"/>
<dbReference type="PaxDb" id="7227-FBpp0080129"/>
<dbReference type="DNASU" id="34805"/>
<dbReference type="EnsemblMetazoa" id="FBtr0080552">
    <property type="protein sequence ID" value="FBpp0080129"/>
    <property type="gene ID" value="FBgn0012037"/>
</dbReference>
<dbReference type="EnsemblMetazoa" id="FBtr0080553">
    <property type="protein sequence ID" value="FBpp0080130"/>
    <property type="gene ID" value="FBgn0012037"/>
</dbReference>
<dbReference type="EnsemblMetazoa" id="FBtr0343667">
    <property type="protein sequence ID" value="FBpp0310259"/>
    <property type="gene ID" value="FBgn0012037"/>
</dbReference>
<dbReference type="GeneID" id="34805"/>
<dbReference type="KEGG" id="dme:Dmel_CG8827"/>
<dbReference type="AGR" id="FB:FBgn0012037"/>
<dbReference type="CTD" id="34805"/>
<dbReference type="FlyBase" id="FBgn0012037">
    <property type="gene designation" value="Ance"/>
</dbReference>
<dbReference type="VEuPathDB" id="VectorBase:FBgn0012037"/>
<dbReference type="eggNOG" id="KOG3690">
    <property type="taxonomic scope" value="Eukaryota"/>
</dbReference>
<dbReference type="HOGENOM" id="CLU_014364_3_3_1"/>
<dbReference type="InParanoid" id="Q10714"/>
<dbReference type="OMA" id="SMMERPA"/>
<dbReference type="OrthoDB" id="10029630at2759"/>
<dbReference type="PhylomeDB" id="Q10714"/>
<dbReference type="BRENDA" id="3.4.15.1">
    <property type="organism ID" value="1994"/>
</dbReference>
<dbReference type="Reactome" id="R-DME-2022377">
    <property type="pathway name" value="Metabolism of Angiotensinogen to Angiotensins"/>
</dbReference>
<dbReference type="SABIO-RK" id="Q10714"/>
<dbReference type="SignaLink" id="Q10714"/>
<dbReference type="BioGRID-ORCS" id="34805">
    <property type="hits" value="0 hits in 3 CRISPR screens"/>
</dbReference>
<dbReference type="EvolutionaryTrace" id="Q10714"/>
<dbReference type="GenomeRNAi" id="34805"/>
<dbReference type="PRO" id="PR:Q10714"/>
<dbReference type="Proteomes" id="UP000000803">
    <property type="component" value="Chromosome 2L"/>
</dbReference>
<dbReference type="Bgee" id="FBgn0012037">
    <property type="expression patterns" value="Expressed in eye disc (Drosophila) and 146 other cell types or tissues"/>
</dbReference>
<dbReference type="ExpressionAtlas" id="Q10714">
    <property type="expression patterns" value="baseline and differential"/>
</dbReference>
<dbReference type="GO" id="GO:0005615">
    <property type="term" value="C:extracellular space"/>
    <property type="evidence" value="ECO:0000314"/>
    <property type="project" value="FlyBase"/>
</dbReference>
<dbReference type="GO" id="GO:0005886">
    <property type="term" value="C:plasma membrane"/>
    <property type="evidence" value="ECO:0000318"/>
    <property type="project" value="GO_Central"/>
</dbReference>
<dbReference type="GO" id="GO:0004180">
    <property type="term" value="F:carboxypeptidase activity"/>
    <property type="evidence" value="ECO:0007669"/>
    <property type="project" value="UniProtKB-KW"/>
</dbReference>
<dbReference type="GO" id="GO:0046872">
    <property type="term" value="F:metal ion binding"/>
    <property type="evidence" value="ECO:0007669"/>
    <property type="project" value="UniProtKB-KW"/>
</dbReference>
<dbReference type="GO" id="GO:0008237">
    <property type="term" value="F:metallopeptidase activity"/>
    <property type="evidence" value="ECO:0000314"/>
    <property type="project" value="FlyBase"/>
</dbReference>
<dbReference type="GO" id="GO:0008241">
    <property type="term" value="F:peptidyl-dipeptidase activity"/>
    <property type="evidence" value="ECO:0000314"/>
    <property type="project" value="FlyBase"/>
</dbReference>
<dbReference type="GO" id="GO:0007552">
    <property type="term" value="P:metamorphosis"/>
    <property type="evidence" value="ECO:0000270"/>
    <property type="project" value="FlyBase"/>
</dbReference>
<dbReference type="GO" id="GO:0016486">
    <property type="term" value="P:peptide hormone processing"/>
    <property type="evidence" value="ECO:0000314"/>
    <property type="project" value="FlyBase"/>
</dbReference>
<dbReference type="GO" id="GO:0006508">
    <property type="term" value="P:proteolysis"/>
    <property type="evidence" value="ECO:0000314"/>
    <property type="project" value="FlyBase"/>
</dbReference>
<dbReference type="GO" id="GO:0009609">
    <property type="term" value="P:response to symbiotic bacterium"/>
    <property type="evidence" value="ECO:0000270"/>
    <property type="project" value="FlyBase"/>
</dbReference>
<dbReference type="GO" id="GO:0019953">
    <property type="term" value="P:sexual reproduction"/>
    <property type="evidence" value="ECO:0000270"/>
    <property type="project" value="FlyBase"/>
</dbReference>
<dbReference type="CDD" id="cd06461">
    <property type="entry name" value="M2_ACE"/>
    <property type="match status" value="1"/>
</dbReference>
<dbReference type="Gene3D" id="1.10.1370.30">
    <property type="match status" value="1"/>
</dbReference>
<dbReference type="InterPro" id="IPR001548">
    <property type="entry name" value="Peptidase_M2"/>
</dbReference>
<dbReference type="PANTHER" id="PTHR10514">
    <property type="entry name" value="ANGIOTENSIN-CONVERTING ENZYME"/>
    <property type="match status" value="1"/>
</dbReference>
<dbReference type="PANTHER" id="PTHR10514:SF44">
    <property type="entry name" value="ANGIOTENSIN-CONVERTING ENZYME-RELATED"/>
    <property type="match status" value="1"/>
</dbReference>
<dbReference type="Pfam" id="PF01401">
    <property type="entry name" value="Peptidase_M2"/>
    <property type="match status" value="1"/>
</dbReference>
<dbReference type="PRINTS" id="PR00791">
    <property type="entry name" value="PEPDIPTASEA"/>
</dbReference>
<dbReference type="SUPFAM" id="SSF55486">
    <property type="entry name" value="Metalloproteases ('zincins'), catalytic domain"/>
    <property type="match status" value="1"/>
</dbReference>
<dbReference type="PROSITE" id="PS52011">
    <property type="entry name" value="PEPTIDASE_M2"/>
    <property type="match status" value="1"/>
</dbReference>
<dbReference type="PROSITE" id="PS00142">
    <property type="entry name" value="ZINC_PROTEASE"/>
    <property type="match status" value="1"/>
</dbReference>
<keyword id="KW-0002">3D-structure</keyword>
<keyword id="KW-0121">Carboxypeptidase</keyword>
<keyword id="KW-1015">Disulfide bond</keyword>
<keyword id="KW-0325">Glycoprotein</keyword>
<keyword id="KW-0378">Hydrolase</keyword>
<keyword id="KW-0479">Metal-binding</keyword>
<keyword id="KW-0482">Metalloprotease</keyword>
<keyword id="KW-0645">Protease</keyword>
<keyword id="KW-1185">Reference proteome</keyword>
<keyword id="KW-0964">Secreted</keyword>
<keyword id="KW-0732">Signal</keyword>
<keyword id="KW-0862">Zinc</keyword>
<feature type="signal peptide">
    <location>
        <begin position="1"/>
        <end position="17"/>
    </location>
</feature>
<feature type="chain" id="PRO_0000028563" description="Angiotensin-converting enzyme">
    <location>
        <begin position="18"/>
        <end position="615"/>
    </location>
</feature>
<feature type="domain" description="Peptidase M2" evidence="1">
    <location>
        <begin position="19"/>
        <end position="607"/>
    </location>
</feature>
<feature type="active site" description="Proton acceptor" evidence="1">
    <location>
        <position position="368"/>
    </location>
</feature>
<feature type="active site" description="Proton donor" evidence="1">
    <location>
        <position position="497"/>
    </location>
</feature>
<feature type="binding site" evidence="1">
    <location>
        <position position="367"/>
    </location>
    <ligand>
        <name>Zn(2+)</name>
        <dbReference type="ChEBI" id="CHEBI:29105"/>
        <note>catalytic</note>
    </ligand>
</feature>
<feature type="binding site" evidence="1">
    <location>
        <position position="371"/>
    </location>
    <ligand>
        <name>Zn(2+)</name>
        <dbReference type="ChEBI" id="CHEBI:29105"/>
        <note>catalytic</note>
    </ligand>
</feature>
<feature type="binding site" evidence="1">
    <location>
        <position position="395"/>
    </location>
    <ligand>
        <name>Zn(2+)</name>
        <dbReference type="ChEBI" id="CHEBI:29105"/>
        <note>catalytic</note>
    </ligand>
</feature>
<feature type="glycosylation site" description="N-linked (GlcNAc...) asparagine" evidence="7">
    <location>
        <position position="53"/>
    </location>
</feature>
<feature type="glycosylation site" description="N-linked (GlcNAc...) asparagine" evidence="7">
    <location>
        <position position="196"/>
    </location>
</feature>
<feature type="glycosylation site" description="N-linked (GlcNAc...) asparagine" evidence="7">
    <location>
        <position position="311"/>
    </location>
</feature>
<feature type="disulfide bond" evidence="1">
    <location>
        <begin position="133"/>
        <end position="141"/>
    </location>
</feature>
<feature type="disulfide bond" evidence="1">
    <location>
        <begin position="336"/>
        <end position="354"/>
    </location>
</feature>
<feature type="disulfide bond" evidence="1">
    <location>
        <begin position="522"/>
        <end position="540"/>
    </location>
</feature>
<feature type="sequence conflict" description="In Ref. 4; AAC46902." evidence="6" ref="4">
    <original>WAYG</original>
    <variation>GPMR</variation>
    <location>
        <begin position="48"/>
        <end position="51"/>
    </location>
</feature>
<feature type="sequence conflict" description="In Ref. 4; AAC46902." evidence="6" ref="4">
    <original>C</original>
    <variation>S</variation>
    <location>
        <position position="141"/>
    </location>
</feature>
<feature type="sequence conflict" description="In Ref. 2; AAB02171." evidence="6" ref="2">
    <original>G</original>
    <variation>A</variation>
    <location>
        <position position="293"/>
    </location>
</feature>
<feature type="sequence conflict" description="In Ref. 1, 2; AAB02171, 4; AAC46902 and 5." evidence="6" ref="1 2 4 5">
    <original>T</original>
    <variation>I</variation>
    <location>
        <position position="346"/>
    </location>
</feature>
<feature type="sequence conflict" description="In Ref. 1." evidence="6" ref="1">
    <original>V</original>
    <variation>E</variation>
    <location>
        <position position="365"/>
    </location>
</feature>
<feature type="sequence conflict" description="In Ref. 1." evidence="6" ref="1">
    <original>S</original>
    <variation>A</variation>
    <location>
        <position position="402"/>
    </location>
</feature>
<feature type="sequence conflict" description="In Ref. 1." evidence="6" ref="1">
    <original>I</original>
    <variation>T</variation>
    <location>
        <position position="414"/>
    </location>
</feature>
<feature type="sequence conflict" description="In Ref. 4; AAC46902." evidence="6" ref="4">
    <original>S</original>
    <variation>T</variation>
    <location>
        <position position="486"/>
    </location>
</feature>
<feature type="sequence conflict" description="In Ref. 4; AAC46902." evidence="6" ref="4">
    <original>V</original>
    <variation>M</variation>
    <location>
        <position position="533"/>
    </location>
</feature>
<feature type="sequence conflict" description="In Ref. 2; AAB02171." evidence="6" ref="2">
    <original>A</original>
    <variation>R</variation>
    <location>
        <position position="547"/>
    </location>
</feature>
<feature type="helix" evidence="11">
    <location>
        <begin position="20"/>
        <end position="22"/>
    </location>
</feature>
<feature type="helix" evidence="11">
    <location>
        <begin position="26"/>
        <end position="51"/>
    </location>
</feature>
<feature type="helix" evidence="11">
    <location>
        <begin position="56"/>
        <end position="80"/>
    </location>
</feature>
<feature type="helix" evidence="11">
    <location>
        <begin position="85"/>
        <end position="87"/>
    </location>
</feature>
<feature type="helix" evidence="11">
    <location>
        <begin position="91"/>
        <end position="101"/>
    </location>
</feature>
<feature type="helix" evidence="11">
    <location>
        <begin position="104"/>
        <end position="107"/>
    </location>
</feature>
<feature type="helix" evidence="11">
    <location>
        <begin position="110"/>
        <end position="129"/>
    </location>
</feature>
<feature type="turn" evidence="11">
    <location>
        <begin position="145"/>
        <end position="147"/>
    </location>
</feature>
<feature type="helix" evidence="11">
    <location>
        <begin position="148"/>
        <end position="155"/>
    </location>
</feature>
<feature type="helix" evidence="11">
    <location>
        <begin position="159"/>
        <end position="173"/>
    </location>
</feature>
<feature type="helix" evidence="11">
    <location>
        <begin position="175"/>
        <end position="177"/>
    </location>
</feature>
<feature type="helix" evidence="11">
    <location>
        <begin position="178"/>
        <end position="194"/>
    </location>
</feature>
<feature type="helix" evidence="11">
    <location>
        <begin position="200"/>
        <end position="205"/>
    </location>
</feature>
<feature type="helix" evidence="11">
    <location>
        <begin position="206"/>
        <end position="208"/>
    </location>
</feature>
<feature type="helix" evidence="11">
    <location>
        <begin position="213"/>
        <end position="243"/>
    </location>
</feature>
<feature type="turn" evidence="11">
    <location>
        <begin position="245"/>
        <end position="247"/>
    </location>
</feature>
<feature type="strand" evidence="11">
    <location>
        <begin position="250"/>
        <end position="252"/>
    </location>
</feature>
<feature type="helix" evidence="11">
    <location>
        <begin position="256"/>
        <end position="258"/>
    </location>
</feature>
<feature type="strand" evidence="11">
    <location>
        <begin position="259"/>
        <end position="261"/>
    </location>
</feature>
<feature type="helix" evidence="11">
    <location>
        <begin position="268"/>
        <end position="270"/>
    </location>
</feature>
<feature type="helix" evidence="11">
    <location>
        <begin position="271"/>
        <end position="274"/>
    </location>
</feature>
<feature type="strand" evidence="9">
    <location>
        <begin position="278"/>
        <end position="280"/>
    </location>
</feature>
<feature type="helix" evidence="11">
    <location>
        <begin position="286"/>
        <end position="291"/>
    </location>
</feature>
<feature type="helix" evidence="11">
    <location>
        <begin position="296"/>
        <end position="309"/>
    </location>
</feature>
<feature type="helix" evidence="11">
    <location>
        <begin position="317"/>
        <end position="322"/>
    </location>
</feature>
<feature type="strand" evidence="10">
    <location>
        <begin position="329"/>
        <end position="331"/>
    </location>
</feature>
<feature type="strand" evidence="11">
    <location>
        <begin position="339"/>
        <end position="342"/>
    </location>
</feature>
<feature type="strand" evidence="11">
    <location>
        <begin position="344"/>
        <end position="347"/>
    </location>
</feature>
<feature type="strand" evidence="11">
    <location>
        <begin position="349"/>
        <end position="352"/>
    </location>
</feature>
<feature type="helix" evidence="11">
    <location>
        <begin position="359"/>
        <end position="377"/>
    </location>
</feature>
<feature type="turn" evidence="11">
    <location>
        <begin position="378"/>
        <end position="380"/>
    </location>
</feature>
<feature type="helix" evidence="11">
    <location>
        <begin position="383"/>
        <end position="385"/>
    </location>
</feature>
<feature type="helix" evidence="11">
    <location>
        <begin position="391"/>
        <end position="405"/>
    </location>
</feature>
<feature type="helix" evidence="11">
    <location>
        <begin position="408"/>
        <end position="413"/>
    </location>
</feature>
<feature type="strand" evidence="8">
    <location>
        <begin position="416"/>
        <end position="419"/>
    </location>
</feature>
<feature type="helix" evidence="11">
    <location>
        <begin position="424"/>
        <end position="438"/>
    </location>
</feature>
<feature type="helix" evidence="11">
    <location>
        <begin position="441"/>
        <end position="456"/>
    </location>
</feature>
<feature type="turn" evidence="9">
    <location>
        <begin position="457"/>
        <end position="459"/>
    </location>
</feature>
<feature type="helix" evidence="11">
    <location>
        <begin position="462"/>
        <end position="464"/>
    </location>
</feature>
<feature type="helix" evidence="11">
    <location>
        <begin position="465"/>
        <end position="477"/>
    </location>
</feature>
<feature type="helix" evidence="11">
    <location>
        <begin position="492"/>
        <end position="494"/>
    </location>
</feature>
<feature type="helix" evidence="11">
    <location>
        <begin position="496"/>
        <end position="499"/>
    </location>
</feature>
<feature type="helix" evidence="11">
    <location>
        <begin position="505"/>
        <end position="524"/>
    </location>
</feature>
<feature type="turn" evidence="9">
    <location>
        <begin position="525"/>
        <end position="527"/>
    </location>
</feature>
<feature type="strand" evidence="9">
    <location>
        <begin position="530"/>
        <end position="535"/>
    </location>
</feature>
<feature type="helix" evidence="11">
    <location>
        <begin position="537"/>
        <end position="539"/>
    </location>
</feature>
<feature type="helix" evidence="11">
    <location>
        <begin position="546"/>
        <end position="556"/>
    </location>
</feature>
<feature type="turn" evidence="11">
    <location>
        <begin position="557"/>
        <end position="560"/>
    </location>
</feature>
<feature type="helix" evidence="11">
    <location>
        <begin position="564"/>
        <end position="572"/>
    </location>
</feature>
<feature type="helix" evidence="11">
    <location>
        <begin position="580"/>
        <end position="599"/>
    </location>
</feature>
<feature type="strand" evidence="11">
    <location>
        <begin position="611"/>
        <end position="613"/>
    </location>
</feature>
<proteinExistence type="evidence at protein level"/>
<protein>
    <recommendedName>
        <fullName>Angiotensin-converting enzyme</fullName>
        <ecNumber>3.4.15.1</ecNumber>
    </recommendedName>
    <alternativeName>
        <fullName>Dipeptidyl carboxypeptidase I</fullName>
    </alternativeName>
    <alternativeName>
        <fullName>Kininase II</fullName>
    </alternativeName>
</protein>
<reference key="1">
    <citation type="journal article" date="1993" name="Biochem. Soc. Trans.">
        <title>Characterisation of putative Drosophila angiotensin converting enzyme cDNA clones.</title>
        <authorList>
            <person name="Cornell M.J."/>
            <person name="Coates D."/>
            <person name="Isaac R.E."/>
        </authorList>
    </citation>
    <scope>NUCLEOTIDE SEQUENCE [MRNA]</scope>
    <source>
        <tissue>Embryo</tissue>
    </source>
</reference>
<reference key="2">
    <citation type="journal article" date="1995" name="J. Biol. Chem.">
        <title>Cloning and expression of an evolutionary conserved single-domain angiotensin converting enzyme from Drosophila melanogaster.</title>
        <authorList>
            <person name="Cornell M.J."/>
            <person name="Williams T.A."/>
            <person name="Lamango N.S."/>
            <person name="Coates D."/>
            <person name="Corvol P."/>
            <person name="Soubrier F."/>
            <person name="Hoheisel J."/>
            <person name="Lehrach H."/>
            <person name="Isaac R.E."/>
        </authorList>
    </citation>
    <scope>NUCLEOTIDE SEQUENCE [MRNA]</scope>
    <scope>ENZYME ACTIVITY</scope>
    <scope>BIOPHYSICOCHEMICAL PROPERTIES</scope>
    <scope>ACTIVITY REGULATION</scope>
</reference>
<reference key="3">
    <citation type="submission" date="1996-06" db="EMBL/GenBank/DDBJ databases">
        <authorList>
            <person name="Cornell M.J."/>
        </authorList>
    </citation>
    <scope>SEQUENCE REVISION</scope>
</reference>
<reference key="4">
    <citation type="journal article" date="1995" name="Mech. Dev.">
        <title>Race: a Drosophila homologue of the angiotensin converting enzyme.</title>
        <authorList>
            <person name="Tatei K."/>
            <person name="Cai H."/>
            <person name="Ip Y.T."/>
            <person name="Levine M."/>
        </authorList>
    </citation>
    <scope>NUCLEOTIDE SEQUENCE [MRNA]</scope>
    <source>
        <strain>Canton-S</strain>
    </source>
</reference>
<reference key="5">
    <citation type="journal article" date="1999" name="Genetics">
        <title>An exploration of the sequence of a 2.9-Mb region of the genome of Drosophila melanogaster: the Adh region.</title>
        <authorList>
            <person name="Ashburner M."/>
            <person name="Misra S."/>
            <person name="Roote J."/>
            <person name="Lewis S.E."/>
            <person name="Blazej R.G."/>
            <person name="Davis T."/>
            <person name="Doyle C."/>
            <person name="Galle R.F."/>
            <person name="George R.A."/>
            <person name="Harris N.L."/>
            <person name="Hartzell G."/>
            <person name="Harvey D.A."/>
            <person name="Hong L."/>
            <person name="Houston K.A."/>
            <person name="Hoskins R.A."/>
            <person name="Johnson G."/>
            <person name="Martin C."/>
            <person name="Moshrefi A.R."/>
            <person name="Palazzolo M."/>
            <person name="Reese M.G."/>
            <person name="Spradling A.C."/>
            <person name="Tsang G."/>
            <person name="Wan K.H."/>
            <person name="Whitelaw K."/>
            <person name="Celniker S.E."/>
            <person name="Rubin G.M."/>
        </authorList>
    </citation>
    <scope>NUCLEOTIDE SEQUENCE [LARGE SCALE GENOMIC DNA]</scope>
    <source>
        <strain>Berkeley</strain>
    </source>
</reference>
<reference key="6">
    <citation type="journal article" date="2000" name="Science">
        <title>The genome sequence of Drosophila melanogaster.</title>
        <authorList>
            <person name="Adams M.D."/>
            <person name="Celniker S.E."/>
            <person name="Holt R.A."/>
            <person name="Evans C.A."/>
            <person name="Gocayne J.D."/>
            <person name="Amanatides P.G."/>
            <person name="Scherer S.E."/>
            <person name="Li P.W."/>
            <person name="Hoskins R.A."/>
            <person name="Galle R.F."/>
            <person name="George R.A."/>
            <person name="Lewis S.E."/>
            <person name="Richards S."/>
            <person name="Ashburner M."/>
            <person name="Henderson S.N."/>
            <person name="Sutton G.G."/>
            <person name="Wortman J.R."/>
            <person name="Yandell M.D."/>
            <person name="Zhang Q."/>
            <person name="Chen L.X."/>
            <person name="Brandon R.C."/>
            <person name="Rogers Y.-H.C."/>
            <person name="Blazej R.G."/>
            <person name="Champe M."/>
            <person name="Pfeiffer B.D."/>
            <person name="Wan K.H."/>
            <person name="Doyle C."/>
            <person name="Baxter E.G."/>
            <person name="Helt G."/>
            <person name="Nelson C.R."/>
            <person name="Miklos G.L.G."/>
            <person name="Abril J.F."/>
            <person name="Agbayani A."/>
            <person name="An H.-J."/>
            <person name="Andrews-Pfannkoch C."/>
            <person name="Baldwin D."/>
            <person name="Ballew R.M."/>
            <person name="Basu A."/>
            <person name="Baxendale J."/>
            <person name="Bayraktaroglu L."/>
            <person name="Beasley E.M."/>
            <person name="Beeson K.Y."/>
            <person name="Benos P.V."/>
            <person name="Berman B.P."/>
            <person name="Bhandari D."/>
            <person name="Bolshakov S."/>
            <person name="Borkova D."/>
            <person name="Botchan M.R."/>
            <person name="Bouck J."/>
            <person name="Brokstein P."/>
            <person name="Brottier P."/>
            <person name="Burtis K.C."/>
            <person name="Busam D.A."/>
            <person name="Butler H."/>
            <person name="Cadieu E."/>
            <person name="Center A."/>
            <person name="Chandra I."/>
            <person name="Cherry J.M."/>
            <person name="Cawley S."/>
            <person name="Dahlke C."/>
            <person name="Davenport L.B."/>
            <person name="Davies P."/>
            <person name="de Pablos B."/>
            <person name="Delcher A."/>
            <person name="Deng Z."/>
            <person name="Mays A.D."/>
            <person name="Dew I."/>
            <person name="Dietz S.M."/>
            <person name="Dodson K."/>
            <person name="Doup L.E."/>
            <person name="Downes M."/>
            <person name="Dugan-Rocha S."/>
            <person name="Dunkov B.C."/>
            <person name="Dunn P."/>
            <person name="Durbin K.J."/>
            <person name="Evangelista C.C."/>
            <person name="Ferraz C."/>
            <person name="Ferriera S."/>
            <person name="Fleischmann W."/>
            <person name="Fosler C."/>
            <person name="Gabrielian A.E."/>
            <person name="Garg N.S."/>
            <person name="Gelbart W.M."/>
            <person name="Glasser K."/>
            <person name="Glodek A."/>
            <person name="Gong F."/>
            <person name="Gorrell J.H."/>
            <person name="Gu Z."/>
            <person name="Guan P."/>
            <person name="Harris M."/>
            <person name="Harris N.L."/>
            <person name="Harvey D.A."/>
            <person name="Heiman T.J."/>
            <person name="Hernandez J.R."/>
            <person name="Houck J."/>
            <person name="Hostin D."/>
            <person name="Houston K.A."/>
            <person name="Howland T.J."/>
            <person name="Wei M.-H."/>
            <person name="Ibegwam C."/>
            <person name="Jalali M."/>
            <person name="Kalush F."/>
            <person name="Karpen G.H."/>
            <person name="Ke Z."/>
            <person name="Kennison J.A."/>
            <person name="Ketchum K.A."/>
            <person name="Kimmel B.E."/>
            <person name="Kodira C.D."/>
            <person name="Kraft C.L."/>
            <person name="Kravitz S."/>
            <person name="Kulp D."/>
            <person name="Lai Z."/>
            <person name="Lasko P."/>
            <person name="Lei Y."/>
            <person name="Levitsky A.A."/>
            <person name="Li J.H."/>
            <person name="Li Z."/>
            <person name="Liang Y."/>
            <person name="Lin X."/>
            <person name="Liu X."/>
            <person name="Mattei B."/>
            <person name="McIntosh T.C."/>
            <person name="McLeod M.P."/>
            <person name="McPherson D."/>
            <person name="Merkulov G."/>
            <person name="Milshina N.V."/>
            <person name="Mobarry C."/>
            <person name="Morris J."/>
            <person name="Moshrefi A."/>
            <person name="Mount S.M."/>
            <person name="Moy M."/>
            <person name="Murphy B."/>
            <person name="Murphy L."/>
            <person name="Muzny D.M."/>
            <person name="Nelson D.L."/>
            <person name="Nelson D.R."/>
            <person name="Nelson K.A."/>
            <person name="Nixon K."/>
            <person name="Nusskern D.R."/>
            <person name="Pacleb J.M."/>
            <person name="Palazzolo M."/>
            <person name="Pittman G.S."/>
            <person name="Pan S."/>
            <person name="Pollard J."/>
            <person name="Puri V."/>
            <person name="Reese M.G."/>
            <person name="Reinert K."/>
            <person name="Remington K."/>
            <person name="Saunders R.D.C."/>
            <person name="Scheeler F."/>
            <person name="Shen H."/>
            <person name="Shue B.C."/>
            <person name="Siden-Kiamos I."/>
            <person name="Simpson M."/>
            <person name="Skupski M.P."/>
            <person name="Smith T.J."/>
            <person name="Spier E."/>
            <person name="Spradling A.C."/>
            <person name="Stapleton M."/>
            <person name="Strong R."/>
            <person name="Sun E."/>
            <person name="Svirskas R."/>
            <person name="Tector C."/>
            <person name="Turner R."/>
            <person name="Venter E."/>
            <person name="Wang A.H."/>
            <person name="Wang X."/>
            <person name="Wang Z.-Y."/>
            <person name="Wassarman D.A."/>
            <person name="Weinstock G.M."/>
            <person name="Weissenbach J."/>
            <person name="Williams S.M."/>
            <person name="Woodage T."/>
            <person name="Worley K.C."/>
            <person name="Wu D."/>
            <person name="Yang S."/>
            <person name="Yao Q.A."/>
            <person name="Ye J."/>
            <person name="Yeh R.-F."/>
            <person name="Zaveri J.S."/>
            <person name="Zhan M."/>
            <person name="Zhang G."/>
            <person name="Zhao Q."/>
            <person name="Zheng L."/>
            <person name="Zheng X.H."/>
            <person name="Zhong F.N."/>
            <person name="Zhong W."/>
            <person name="Zhou X."/>
            <person name="Zhu S.C."/>
            <person name="Zhu X."/>
            <person name="Smith H.O."/>
            <person name="Gibbs R.A."/>
            <person name="Myers E.W."/>
            <person name="Rubin G.M."/>
            <person name="Venter J.C."/>
        </authorList>
    </citation>
    <scope>NUCLEOTIDE SEQUENCE [LARGE SCALE GENOMIC DNA]</scope>
    <source>
        <strain>Berkeley</strain>
    </source>
</reference>
<reference key="7">
    <citation type="journal article" date="2002" name="Genome Biol.">
        <title>Annotation of the Drosophila melanogaster euchromatic genome: a systematic review.</title>
        <authorList>
            <person name="Misra S."/>
            <person name="Crosby M.A."/>
            <person name="Mungall C.J."/>
            <person name="Matthews B.B."/>
            <person name="Campbell K.S."/>
            <person name="Hradecky P."/>
            <person name="Huang Y."/>
            <person name="Kaminker J.S."/>
            <person name="Millburn G.H."/>
            <person name="Prochnik S.E."/>
            <person name="Smith C.D."/>
            <person name="Tupy J.L."/>
            <person name="Whitfield E.J."/>
            <person name="Bayraktaroglu L."/>
            <person name="Berman B.P."/>
            <person name="Bettencourt B.R."/>
            <person name="Celniker S.E."/>
            <person name="de Grey A.D.N.J."/>
            <person name="Drysdale R.A."/>
            <person name="Harris N.L."/>
            <person name="Richter J."/>
            <person name="Russo S."/>
            <person name="Schroeder A.J."/>
            <person name="Shu S.Q."/>
            <person name="Stapleton M."/>
            <person name="Yamada C."/>
            <person name="Ashburner M."/>
            <person name="Gelbart W.M."/>
            <person name="Rubin G.M."/>
            <person name="Lewis S.E."/>
        </authorList>
    </citation>
    <scope>GENOME REANNOTATION</scope>
    <source>
        <strain>Berkeley</strain>
    </source>
</reference>
<reference key="8">
    <citation type="journal article" date="2002" name="Genome Biol.">
        <title>A Drosophila full-length cDNA resource.</title>
        <authorList>
            <person name="Stapleton M."/>
            <person name="Carlson J.W."/>
            <person name="Brokstein P."/>
            <person name="Yu C."/>
            <person name="Champe M."/>
            <person name="George R.A."/>
            <person name="Guarin H."/>
            <person name="Kronmiller B."/>
            <person name="Pacleb J.M."/>
            <person name="Park S."/>
            <person name="Wan K.H."/>
            <person name="Rubin G.M."/>
            <person name="Celniker S.E."/>
        </authorList>
    </citation>
    <scope>NUCLEOTIDE SEQUENCE [LARGE SCALE MRNA]</scope>
    <source>
        <strain>Berkeley</strain>
        <tissue>Embryo</tissue>
    </source>
</reference>
<reference key="9">
    <citation type="journal article" date="1996" name="Biochem. J.">
        <title>Drosophila melanogaster angiotensin I-converting enzyme expressed in Pichia pastoris resembles the C domain of the mammalian homologue and does not require glycosylation for secretion and enzymic activity.</title>
        <authorList>
            <person name="Williams T.A."/>
            <person name="Michaud A."/>
            <person name="Houard X."/>
            <person name="Chauvet M.-T."/>
            <person name="Soubrier F."/>
            <person name="Corvol P."/>
        </authorList>
    </citation>
    <scope>CLEAVAGE SITE</scope>
    <scope>GLYCOSYLATION</scope>
    <scope>ACTIVITY REGULATION</scope>
    <scope>BIOPHYSICOCHEMICAL PROPERTIES</scope>
</reference>
<reference key="10">
    <citation type="journal article" date="1998" name="Eur. J. Biochem.">
        <title>The Drosophila melanogaster-related angiotensin-I-converting enzymes Acer and Ance -- distinct enzymic characteristics and alternative expression during pupal development.</title>
        <authorList>
            <person name="Houard X."/>
            <person name="Williams T.A."/>
            <person name="Michaud A."/>
            <person name="Dani P."/>
            <person name="Isaac R.E."/>
            <person name="Shirras A.D."/>
            <person name="Coates D."/>
            <person name="Corvol P."/>
        </authorList>
    </citation>
    <scope>BIOPHYSICOCHEMICAL PROPERTIES</scope>
</reference>
<reference key="11">
    <citation type="journal article" date="2003" name="Dev. Biol.">
        <title>The Drosophila angiotensin-converting enzyme homologue Ance is required for spermiogenesis.</title>
        <authorList>
            <person name="Hurst D."/>
            <person name="Rylett C.M."/>
            <person name="Isaac R.E."/>
            <person name="Shirras A.D."/>
        </authorList>
    </citation>
    <scope>TISSUE SPECIFICITY</scope>
    <scope>FUNCTION</scope>
    <scope>DISRUPTION PHENOTYPE</scope>
</reference>
<reference key="12">
    <citation type="journal article" date="2003" name="FEBS Lett.">
        <title>Crystal structure of Drosophila angiotensin I-converting enzyme bound to captopril and lisinopril.</title>
        <authorList>
            <person name="Kim H.M."/>
            <person name="Shin D.R."/>
            <person name="Yoo O.J."/>
            <person name="Lee H."/>
            <person name="Lee J.-O."/>
        </authorList>
    </citation>
    <scope>X-RAY CRYSTALLOGRAPHY (2.6 ANGSTROMS) OF 14-615</scope>
    <scope>X-RAY CRYSTALLOGRAPHY (2.4 ANGSTROMS) OF 14-615 IN COMPLEX WITH CAPTOPRIL</scope>
    <scope>X-RAY CRYSTALLOGRAPHY (2.4 ANGSTROMS) OF 14-615 IN COMPLEX WITH LISINOPRIL</scope>
</reference>
<comment type="function">
    <text evidence="2">May be involved in the specific maturation or degradation of a number of bioactive peptides. May play a role in the contractions of the heart, gut and testes, and in spermatid differentiation.</text>
</comment>
<comment type="catalytic activity">
    <reaction evidence="3">
        <text>Release of a C-terminal dipeptide, oligopeptide-|-Xaa-Yaa, when Xaa is not Pro, and Yaa is neither Asp nor Glu. Thus, conversion of angiotensin I to angiotensin II, with increase in vasoconstrictor activity, but no action on angiotensin II.</text>
        <dbReference type="EC" id="3.4.15.1"/>
    </reaction>
</comment>
<comment type="cofactor">
    <cofactor>
        <name>Zn(2+)</name>
        <dbReference type="ChEBI" id="CHEBI:29105"/>
    </cofactor>
    <text>Binds 1 zinc ion per subunit.</text>
</comment>
<comment type="activity regulation">
    <text evidence="3 4">Inhibited by captopril and, to a lesser extent, by lisinopril, trandolaprilat, fosinoprilat and enalaprilat.</text>
</comment>
<comment type="biophysicochemical properties">
    <kinetics>
        <KM evidence="3 4 5">33.5 uM for angiotensin I</KM>
        <KM evidence="3 4 5">53.4 uM for N-acetyl-Ser-Asp-Lys-Pro</KM>
        <KM evidence="3 4 5">2.59 mM for Hip-His-Leu</KM>
        <KM evidence="3 4 5">10.26 mM for Hip-His-Leu-NH(2)</KM>
        <KM evidence="3 4 5">372 uM for (Leu5)enkephalin</KM>
        <KM evidence="3 4 5">1.88 mM for (Leu5)enkephalinamide</KM>
    </kinetics>
</comment>
<comment type="interaction">
    <interactant intactId="EBI-115736">
        <id>Q10714</id>
    </interactant>
    <interactant intactId="EBI-751728">
        <id>P01019</id>
        <label>AGT</label>
    </interactant>
    <organismsDiffer>true</organismsDiffer>
    <experiments>2</experiments>
</comment>
<comment type="interaction">
    <interactant intactId="EBI-115736">
        <id>Q10714</id>
    </interactant>
    <interactant intactId="EBI-6378713">
        <id>P01042</id>
        <label>KNG1</label>
    </interactant>
    <organismsDiffer>true</organismsDiffer>
    <experiments>2</experiments>
</comment>
<comment type="subcellular location">
    <subcellularLocation>
        <location>Secreted</location>
        <location>Extracellular space</location>
    </subcellularLocation>
</comment>
<comment type="tissue specificity">
    <text evidence="2">Expressed in vesicular structures in spermatocytes and early spermatids (at protein level).</text>
</comment>
<comment type="developmental stage">
    <text>Expressed in the amnioserosa during germ band elongation, shortening and heart morphogenesis. Expressed in midgut throughout embryogenesis.</text>
</comment>
<comment type="PTM">
    <text evidence="4">Glycosylated.</text>
</comment>
<comment type="disruption phenotype">
    <text evidence="2">Male flies are sterile.</text>
</comment>
<comment type="similarity">
    <text evidence="6">Belongs to the peptidase M2 family.</text>
</comment>
<name>ACE_DROME</name>
<gene>
    <name type="primary">Ance</name>
    <name type="synonym">Race</name>
    <name type="ORF">CG8827</name>
</gene>
<organism>
    <name type="scientific">Drosophila melanogaster</name>
    <name type="common">Fruit fly</name>
    <dbReference type="NCBI Taxonomy" id="7227"/>
    <lineage>
        <taxon>Eukaryota</taxon>
        <taxon>Metazoa</taxon>
        <taxon>Ecdysozoa</taxon>
        <taxon>Arthropoda</taxon>
        <taxon>Hexapoda</taxon>
        <taxon>Insecta</taxon>
        <taxon>Pterygota</taxon>
        <taxon>Neoptera</taxon>
        <taxon>Endopterygota</taxon>
        <taxon>Diptera</taxon>
        <taxon>Brachycera</taxon>
        <taxon>Muscomorpha</taxon>
        <taxon>Ephydroidea</taxon>
        <taxon>Drosophilidae</taxon>
        <taxon>Drosophila</taxon>
        <taxon>Sophophora</taxon>
    </lineage>
</organism>
<evidence type="ECO:0000255" key="1">
    <source>
        <dbReference type="PROSITE-ProRule" id="PRU01355"/>
    </source>
</evidence>
<evidence type="ECO:0000269" key="2">
    <source>
    </source>
</evidence>
<evidence type="ECO:0000269" key="3">
    <source>
    </source>
</evidence>
<evidence type="ECO:0000269" key="4">
    <source>
    </source>
</evidence>
<evidence type="ECO:0000269" key="5">
    <source>
    </source>
</evidence>
<evidence type="ECO:0000305" key="6"/>
<evidence type="ECO:0000305" key="7">
    <source>
    </source>
</evidence>
<evidence type="ECO:0007829" key="8">
    <source>
        <dbReference type="PDB" id="1J36"/>
    </source>
</evidence>
<evidence type="ECO:0007829" key="9">
    <source>
        <dbReference type="PDB" id="1J37"/>
    </source>
</evidence>
<evidence type="ECO:0007829" key="10">
    <source>
        <dbReference type="PDB" id="2X96"/>
    </source>
</evidence>
<evidence type="ECO:0007829" key="11">
    <source>
        <dbReference type="PDB" id="4CA7"/>
    </source>
</evidence>